<sequence>MEPAAGFLSPRPFQRAAAAPAPPAGPGPPPSALRGPELEMLAGLPTSDPGRLITDPRSGRTYLKGRLLGKGGFARCYEATDTETGSAYAVKVIPQSRVAKPHQREKILNEIELHRDLQHRHIVRFSHHFEDADNIYIFLELCSRKSLAHIWKARHTLLEPEVRYYLRQILSGLKYLHQRGILHRDLKLGNFFITENMELKVGDFGLAARLEPPEQRKKTICGTPNYVAPEVLLRQGHGPEADVWSLGCVMYTLLCGSPPFETADLKETYRCIKQVHYTLPASLSLPARQLLAAILRASPRDRPSIDQILRHDFFTKGYTPDRLPISSCVTVPDLTPPNPARSLFAKVTKSLFGRKKKSKNHAQERDEVSGLVSGLMRTSVGHQDARPEAPAASGPAPVSLVETAPEDSSPRGTLASSGDGFEEGLTVATVVESALCALRNCIAFMPPAEQNPAPLAQPEPLVWVSKWVDYSNKFGFGYQLSSRRVAVLFNDGTHMALSANRKTVHYNPTSTKHFSFSVGAVPRALQPQLGILRYFASYMEQHLMKGGDLPSVEEVEVPAPPLLLQWVKTDQALLMLFSDGTVQVNFYGDHTKLILSGWEPLLVTFVARNRSACTYLASHLRQLGCSPDLRQRLRYALRLLRDRSPA</sequence>
<protein>
    <recommendedName>
        <fullName>Serine/threonine-protein kinase PLK3</fullName>
        <ecNumber>2.7.11.21</ecNumber>
    </recommendedName>
    <alternativeName>
        <fullName>Cytokine-inducible serine/threonine-protein kinase</fullName>
    </alternativeName>
    <alternativeName>
        <fullName>FGF-inducible kinase</fullName>
    </alternativeName>
    <alternativeName>
        <fullName>Polo-like kinase 3</fullName>
        <shortName>PLK-3</shortName>
    </alternativeName>
    <alternativeName>
        <fullName>Proliferation-related kinase</fullName>
    </alternativeName>
</protein>
<gene>
    <name type="primary">PLK3</name>
    <name type="synonym">CNK</name>
    <name type="synonym">FNK</name>
    <name type="synonym">PRK</name>
</gene>
<name>PLK3_HUMAN</name>
<keyword id="KW-0002">3D-structure</keyword>
<keyword id="KW-0053">Apoptosis</keyword>
<keyword id="KW-0067">ATP-binding</keyword>
<keyword id="KW-0131">Cell cycle</keyword>
<keyword id="KW-0963">Cytoplasm</keyword>
<keyword id="KW-0206">Cytoskeleton</keyword>
<keyword id="KW-0227">DNA damage</keyword>
<keyword id="KW-0333">Golgi apparatus</keyword>
<keyword id="KW-0418">Kinase</keyword>
<keyword id="KW-0547">Nucleotide-binding</keyword>
<keyword id="KW-0539">Nucleus</keyword>
<keyword id="KW-0597">Phosphoprotein</keyword>
<keyword id="KW-1267">Proteomics identification</keyword>
<keyword id="KW-1185">Reference proteome</keyword>
<keyword id="KW-0677">Repeat</keyword>
<keyword id="KW-0723">Serine/threonine-protein kinase</keyword>
<keyword id="KW-0808">Transferase</keyword>
<dbReference type="EC" id="2.7.11.21"/>
<dbReference type="EMBL" id="AJ293866">
    <property type="protein sequence ID" value="CAC10659.1"/>
    <property type="molecule type" value="mRNA"/>
</dbReference>
<dbReference type="EMBL" id="AY764184">
    <property type="protein sequence ID" value="AAU88146.1"/>
    <property type="molecule type" value="Genomic_DNA"/>
</dbReference>
<dbReference type="EMBL" id="AL592166">
    <property type="status" value="NOT_ANNOTATED_CDS"/>
    <property type="molecule type" value="Genomic_DNA"/>
</dbReference>
<dbReference type="EMBL" id="CH471059">
    <property type="protein sequence ID" value="EAX07021.1"/>
    <property type="molecule type" value="Genomic_DNA"/>
</dbReference>
<dbReference type="EMBL" id="BC013899">
    <property type="protein sequence ID" value="AAH13899.1"/>
    <property type="molecule type" value="mRNA"/>
</dbReference>
<dbReference type="EMBL" id="U56998">
    <property type="protein sequence ID" value="AAC50637.1"/>
    <property type="status" value="ALT_INIT"/>
    <property type="molecule type" value="mRNA"/>
</dbReference>
<dbReference type="CCDS" id="CCDS515.1"/>
<dbReference type="RefSeq" id="NP_004064.2">
    <property type="nucleotide sequence ID" value="NM_004073.3"/>
</dbReference>
<dbReference type="PDB" id="4B6L">
    <property type="method" value="X-ray"/>
    <property type="resolution" value="1.90 A"/>
    <property type="chains" value="A=52-332"/>
</dbReference>
<dbReference type="PDBsum" id="4B6L"/>
<dbReference type="SMR" id="Q9H4B4"/>
<dbReference type="BioGRID" id="107663">
    <property type="interactions" value="39"/>
</dbReference>
<dbReference type="FunCoup" id="Q9H4B4">
    <property type="interactions" value="568"/>
</dbReference>
<dbReference type="IntAct" id="Q9H4B4">
    <property type="interactions" value="19"/>
</dbReference>
<dbReference type="STRING" id="9606.ENSP00000361275"/>
<dbReference type="BindingDB" id="Q9H4B4"/>
<dbReference type="ChEMBL" id="CHEMBL4897"/>
<dbReference type="DrugBank" id="DB12010">
    <property type="generic name" value="Fostamatinib"/>
</dbReference>
<dbReference type="DrugCentral" id="Q9H4B4"/>
<dbReference type="GuidetoPHARMACOLOGY" id="2170"/>
<dbReference type="GlyGen" id="Q9H4B4">
    <property type="glycosylation" value="1 site, 1 O-linked glycan (1 site)"/>
</dbReference>
<dbReference type="iPTMnet" id="Q9H4B4"/>
<dbReference type="PhosphoSitePlus" id="Q9H4B4"/>
<dbReference type="BioMuta" id="PLK3"/>
<dbReference type="DMDM" id="51338822"/>
<dbReference type="jPOST" id="Q9H4B4"/>
<dbReference type="MassIVE" id="Q9H4B4"/>
<dbReference type="PaxDb" id="9606-ENSP00000361275"/>
<dbReference type="PeptideAtlas" id="Q9H4B4"/>
<dbReference type="ProteomicsDB" id="80817"/>
<dbReference type="Antibodypedia" id="32550">
    <property type="antibodies" value="278 antibodies from 33 providers"/>
</dbReference>
<dbReference type="DNASU" id="1263"/>
<dbReference type="Ensembl" id="ENST00000372201.5">
    <property type="protein sequence ID" value="ENSP00000361275.4"/>
    <property type="gene ID" value="ENSG00000173846.14"/>
</dbReference>
<dbReference type="Ensembl" id="ENST00000850614.1">
    <property type="protein sequence ID" value="ENSP00000520901.1"/>
    <property type="gene ID" value="ENSG00000173846.14"/>
</dbReference>
<dbReference type="GeneID" id="1263"/>
<dbReference type="KEGG" id="hsa:1263"/>
<dbReference type="MANE-Select" id="ENST00000372201.5">
    <property type="protein sequence ID" value="ENSP00000361275.4"/>
    <property type="RefSeq nucleotide sequence ID" value="NM_004073.4"/>
    <property type="RefSeq protein sequence ID" value="NP_004064.2"/>
</dbReference>
<dbReference type="UCSC" id="uc001cmn.4">
    <property type="organism name" value="human"/>
</dbReference>
<dbReference type="AGR" id="HGNC:2154"/>
<dbReference type="CTD" id="1263"/>
<dbReference type="DisGeNET" id="1263"/>
<dbReference type="GeneCards" id="PLK3"/>
<dbReference type="HGNC" id="HGNC:2154">
    <property type="gene designation" value="PLK3"/>
</dbReference>
<dbReference type="HPA" id="ENSG00000173846">
    <property type="expression patterns" value="Low tissue specificity"/>
</dbReference>
<dbReference type="MIM" id="602913">
    <property type="type" value="gene"/>
</dbReference>
<dbReference type="neXtProt" id="NX_Q9H4B4"/>
<dbReference type="OpenTargets" id="ENSG00000173846"/>
<dbReference type="PharmGKB" id="PA26664"/>
<dbReference type="VEuPathDB" id="HostDB:ENSG00000173846"/>
<dbReference type="eggNOG" id="KOG0575">
    <property type="taxonomic scope" value="Eukaryota"/>
</dbReference>
<dbReference type="GeneTree" id="ENSGT00940000159121"/>
<dbReference type="HOGENOM" id="CLU_000288_46_1_1"/>
<dbReference type="InParanoid" id="Q9H4B4"/>
<dbReference type="OMA" id="FEECVTA"/>
<dbReference type="OrthoDB" id="408964at2759"/>
<dbReference type="PAN-GO" id="Q9H4B4">
    <property type="GO annotations" value="10 GO annotations based on evolutionary models"/>
</dbReference>
<dbReference type="PhylomeDB" id="Q9H4B4"/>
<dbReference type="TreeFam" id="TF101089"/>
<dbReference type="BRENDA" id="2.7.11.21">
    <property type="organism ID" value="2681"/>
</dbReference>
<dbReference type="BRENDA" id="2.7.11.23">
    <property type="organism ID" value="2681"/>
</dbReference>
<dbReference type="PathwayCommons" id="Q9H4B4"/>
<dbReference type="Reactome" id="R-HSA-6804115">
    <property type="pathway name" value="TP53 regulates transcription of additional cell cycle genes whose exact role in the p53 pathway remain uncertain"/>
</dbReference>
<dbReference type="Reactome" id="R-HSA-6804756">
    <property type="pathway name" value="Regulation of TP53 Activity through Phosphorylation"/>
</dbReference>
<dbReference type="SignaLink" id="Q9H4B4"/>
<dbReference type="SIGNOR" id="Q9H4B4"/>
<dbReference type="BioGRID-ORCS" id="1263">
    <property type="hits" value="16 hits in 1188 CRISPR screens"/>
</dbReference>
<dbReference type="CD-CODE" id="8C2F96ED">
    <property type="entry name" value="Centrosome"/>
</dbReference>
<dbReference type="ChiTaRS" id="PLK3">
    <property type="organism name" value="human"/>
</dbReference>
<dbReference type="EvolutionaryTrace" id="Q9H4B4"/>
<dbReference type="GeneWiki" id="PLK3"/>
<dbReference type="GenomeRNAi" id="1263"/>
<dbReference type="Pharos" id="Q9H4B4">
    <property type="development level" value="Tchem"/>
</dbReference>
<dbReference type="PRO" id="PR:Q9H4B4"/>
<dbReference type="Proteomes" id="UP000005640">
    <property type="component" value="Chromosome 1"/>
</dbReference>
<dbReference type="RNAct" id="Q9H4B4">
    <property type="molecule type" value="protein"/>
</dbReference>
<dbReference type="Bgee" id="ENSG00000173846">
    <property type="expression patterns" value="Expressed in oocyte and 124 other cell types or tissues"/>
</dbReference>
<dbReference type="GO" id="GO:0005813">
    <property type="term" value="C:centrosome"/>
    <property type="evidence" value="ECO:0000314"/>
    <property type="project" value="UniProtKB"/>
</dbReference>
<dbReference type="GO" id="GO:0005737">
    <property type="term" value="C:cytoplasm"/>
    <property type="evidence" value="ECO:0000314"/>
    <property type="project" value="UniProtKB"/>
</dbReference>
<dbReference type="GO" id="GO:0030425">
    <property type="term" value="C:dendrite"/>
    <property type="evidence" value="ECO:0007669"/>
    <property type="project" value="Ensembl"/>
</dbReference>
<dbReference type="GO" id="GO:0005795">
    <property type="term" value="C:Golgi stack"/>
    <property type="evidence" value="ECO:0000314"/>
    <property type="project" value="UniProtKB"/>
</dbReference>
<dbReference type="GO" id="GO:0000776">
    <property type="term" value="C:kinetochore"/>
    <property type="evidence" value="ECO:0000318"/>
    <property type="project" value="GO_Central"/>
</dbReference>
<dbReference type="GO" id="GO:0043025">
    <property type="term" value="C:neuronal cell body"/>
    <property type="evidence" value="ECO:0007669"/>
    <property type="project" value="Ensembl"/>
</dbReference>
<dbReference type="GO" id="GO:0005730">
    <property type="term" value="C:nucleolus"/>
    <property type="evidence" value="ECO:0000314"/>
    <property type="project" value="UniProtKB"/>
</dbReference>
<dbReference type="GO" id="GO:0005654">
    <property type="term" value="C:nucleoplasm"/>
    <property type="evidence" value="ECO:0000304"/>
    <property type="project" value="Reactome"/>
</dbReference>
<dbReference type="GO" id="GO:0005634">
    <property type="term" value="C:nucleus"/>
    <property type="evidence" value="ECO:0000314"/>
    <property type="project" value="UniProtKB"/>
</dbReference>
<dbReference type="GO" id="GO:0000922">
    <property type="term" value="C:spindle pole"/>
    <property type="evidence" value="ECO:0000318"/>
    <property type="project" value="GO_Central"/>
</dbReference>
<dbReference type="GO" id="GO:0005524">
    <property type="term" value="F:ATP binding"/>
    <property type="evidence" value="ECO:0007669"/>
    <property type="project" value="UniProtKB-KW"/>
</dbReference>
<dbReference type="GO" id="GO:0002039">
    <property type="term" value="F:p53 binding"/>
    <property type="evidence" value="ECO:0000314"/>
    <property type="project" value="UniProtKB"/>
</dbReference>
<dbReference type="GO" id="GO:0106310">
    <property type="term" value="F:protein serine kinase activity"/>
    <property type="evidence" value="ECO:0007669"/>
    <property type="project" value="RHEA"/>
</dbReference>
<dbReference type="GO" id="GO:0004674">
    <property type="term" value="F:protein serine/threonine kinase activity"/>
    <property type="evidence" value="ECO:0000314"/>
    <property type="project" value="UniProtKB"/>
</dbReference>
<dbReference type="GO" id="GO:0006915">
    <property type="term" value="P:apoptotic process"/>
    <property type="evidence" value="ECO:0000304"/>
    <property type="project" value="UniProtKB"/>
</dbReference>
<dbReference type="GO" id="GO:0031122">
    <property type="term" value="P:cytoplasmic microtubule organization"/>
    <property type="evidence" value="ECO:0000315"/>
    <property type="project" value="UniProtKB"/>
</dbReference>
<dbReference type="GO" id="GO:0006974">
    <property type="term" value="P:DNA damage response"/>
    <property type="evidence" value="ECO:0000314"/>
    <property type="project" value="UniProtKB"/>
</dbReference>
<dbReference type="GO" id="GO:0030330">
    <property type="term" value="P:DNA damage response, signal transduction by p53 class mediator"/>
    <property type="evidence" value="ECO:0000304"/>
    <property type="project" value="Reactome"/>
</dbReference>
<dbReference type="GO" id="GO:0007113">
    <property type="term" value="P:endomitotic cell cycle"/>
    <property type="evidence" value="ECO:0000304"/>
    <property type="project" value="UniProtKB"/>
</dbReference>
<dbReference type="GO" id="GO:0000082">
    <property type="term" value="P:G1/S transition of mitotic cell cycle"/>
    <property type="evidence" value="ECO:0000315"/>
    <property type="project" value="UniProtKB"/>
</dbReference>
<dbReference type="GO" id="GO:0000086">
    <property type="term" value="P:G2/M transition of mitotic cell cycle"/>
    <property type="evidence" value="ECO:0000304"/>
    <property type="project" value="UniProtKB"/>
</dbReference>
<dbReference type="GO" id="GO:0090166">
    <property type="term" value="P:Golgi disassembly"/>
    <property type="evidence" value="ECO:0000314"/>
    <property type="project" value="UniProtKB"/>
</dbReference>
<dbReference type="GO" id="GO:0044819">
    <property type="term" value="P:mitotic G1/S transition checkpoint signaling"/>
    <property type="evidence" value="ECO:0000250"/>
    <property type="project" value="UniProtKB"/>
</dbReference>
<dbReference type="GO" id="GO:0007052">
    <property type="term" value="P:mitotic spindle organization"/>
    <property type="evidence" value="ECO:0000318"/>
    <property type="project" value="GO_Central"/>
</dbReference>
<dbReference type="GO" id="GO:0043066">
    <property type="term" value="P:negative regulation of apoptotic process"/>
    <property type="evidence" value="ECO:0000314"/>
    <property type="project" value="UniProtKB"/>
</dbReference>
<dbReference type="GO" id="GO:0051898">
    <property type="term" value="P:negative regulation of phosphatidylinositol 3-kinase/protein kinase B signal transduction"/>
    <property type="evidence" value="ECO:0000250"/>
    <property type="project" value="UniProtKB"/>
</dbReference>
<dbReference type="GO" id="GO:0000122">
    <property type="term" value="P:negative regulation of transcription by RNA polymerase II"/>
    <property type="evidence" value="ECO:0000314"/>
    <property type="project" value="UniProtKB"/>
</dbReference>
<dbReference type="GO" id="GO:1904716">
    <property type="term" value="P:positive regulation of chaperone-mediated autophagy"/>
    <property type="evidence" value="ECO:0000314"/>
    <property type="project" value="ParkinsonsUK-UCL"/>
</dbReference>
<dbReference type="GO" id="GO:0090316">
    <property type="term" value="P:positive regulation of intracellular protein transport"/>
    <property type="evidence" value="ECO:0000315"/>
    <property type="project" value="UniProtKB"/>
</dbReference>
<dbReference type="GO" id="GO:0032436">
    <property type="term" value="P:positive regulation of proteasomal ubiquitin-dependent protein catabolic process"/>
    <property type="evidence" value="ECO:0000314"/>
    <property type="project" value="UniProtKB"/>
</dbReference>
<dbReference type="GO" id="GO:0006468">
    <property type="term" value="P:protein phosphorylation"/>
    <property type="evidence" value="ECO:0000304"/>
    <property type="project" value="ProtInc"/>
</dbReference>
<dbReference type="GO" id="GO:0051302">
    <property type="term" value="P:regulation of cell division"/>
    <property type="evidence" value="ECO:0000314"/>
    <property type="project" value="UniProtKB"/>
</dbReference>
<dbReference type="GO" id="GO:0032465">
    <property type="term" value="P:regulation of cytokinesis"/>
    <property type="evidence" value="ECO:0000315"/>
    <property type="project" value="UniProtKB"/>
</dbReference>
<dbReference type="GO" id="GO:1901796">
    <property type="term" value="P:regulation of signal transduction by p53 class mediator"/>
    <property type="evidence" value="ECO:0000304"/>
    <property type="project" value="Reactome"/>
</dbReference>
<dbReference type="GO" id="GO:0006970">
    <property type="term" value="P:response to osmotic stress"/>
    <property type="evidence" value="ECO:0000314"/>
    <property type="project" value="UniProtKB"/>
</dbReference>
<dbReference type="GO" id="GO:0009314">
    <property type="term" value="P:response to radiation"/>
    <property type="evidence" value="ECO:0000314"/>
    <property type="project" value="UniProtKB"/>
</dbReference>
<dbReference type="GO" id="GO:0000302">
    <property type="term" value="P:response to reactive oxygen species"/>
    <property type="evidence" value="ECO:0000314"/>
    <property type="project" value="UniProtKB"/>
</dbReference>
<dbReference type="CDD" id="cd13118">
    <property type="entry name" value="POLO_box_1"/>
    <property type="match status" value="1"/>
</dbReference>
<dbReference type="CDD" id="cd13117">
    <property type="entry name" value="POLO_box_2"/>
    <property type="match status" value="1"/>
</dbReference>
<dbReference type="CDD" id="cd14189">
    <property type="entry name" value="STKc_PLK3"/>
    <property type="match status" value="1"/>
</dbReference>
<dbReference type="FunFam" id="1.10.510.10:FF:000189">
    <property type="entry name" value="Serine/threonine-protein kinase PLK"/>
    <property type="match status" value="1"/>
</dbReference>
<dbReference type="FunFam" id="3.30.1120.30:FF:000001">
    <property type="entry name" value="Serine/threonine-protein kinase PLK"/>
    <property type="match status" value="1"/>
</dbReference>
<dbReference type="FunFam" id="3.30.200.20:FF:000091">
    <property type="entry name" value="Serine/threonine-protein kinase PLK"/>
    <property type="match status" value="1"/>
</dbReference>
<dbReference type="Gene3D" id="3.30.200.20">
    <property type="entry name" value="Phosphorylase Kinase, domain 1"/>
    <property type="match status" value="1"/>
</dbReference>
<dbReference type="Gene3D" id="3.30.1120.30">
    <property type="entry name" value="POLO box domain"/>
    <property type="match status" value="2"/>
</dbReference>
<dbReference type="Gene3D" id="1.10.510.10">
    <property type="entry name" value="Transferase(Phosphotransferase) domain 1"/>
    <property type="match status" value="1"/>
</dbReference>
<dbReference type="InterPro" id="IPR011009">
    <property type="entry name" value="Kinase-like_dom_sf"/>
</dbReference>
<dbReference type="InterPro" id="IPR042703">
    <property type="entry name" value="PLK3_STKc"/>
</dbReference>
<dbReference type="InterPro" id="IPR033701">
    <property type="entry name" value="POLO_box_1"/>
</dbReference>
<dbReference type="InterPro" id="IPR033695">
    <property type="entry name" value="POLO_box_2"/>
</dbReference>
<dbReference type="InterPro" id="IPR000959">
    <property type="entry name" value="POLO_box_dom"/>
</dbReference>
<dbReference type="InterPro" id="IPR036947">
    <property type="entry name" value="POLO_box_dom_sf"/>
</dbReference>
<dbReference type="InterPro" id="IPR000719">
    <property type="entry name" value="Prot_kinase_dom"/>
</dbReference>
<dbReference type="InterPro" id="IPR017441">
    <property type="entry name" value="Protein_kinase_ATP_BS"/>
</dbReference>
<dbReference type="InterPro" id="IPR008271">
    <property type="entry name" value="Ser/Thr_kinase_AS"/>
</dbReference>
<dbReference type="PANTHER" id="PTHR24345">
    <property type="entry name" value="SERINE/THREONINE-PROTEIN KINASE PLK"/>
    <property type="match status" value="1"/>
</dbReference>
<dbReference type="PANTHER" id="PTHR24345:SF42">
    <property type="entry name" value="SERINE_THREONINE-PROTEIN KINASE PLK3"/>
    <property type="match status" value="1"/>
</dbReference>
<dbReference type="Pfam" id="PF00069">
    <property type="entry name" value="Pkinase"/>
    <property type="match status" value="1"/>
</dbReference>
<dbReference type="Pfam" id="PF00659">
    <property type="entry name" value="POLO_box"/>
    <property type="match status" value="2"/>
</dbReference>
<dbReference type="SMART" id="SM00220">
    <property type="entry name" value="S_TKc"/>
    <property type="match status" value="1"/>
</dbReference>
<dbReference type="SUPFAM" id="SSF82615">
    <property type="entry name" value="Polo-box domain"/>
    <property type="match status" value="2"/>
</dbReference>
<dbReference type="SUPFAM" id="SSF56112">
    <property type="entry name" value="Protein kinase-like (PK-like)"/>
    <property type="match status" value="1"/>
</dbReference>
<dbReference type="PROSITE" id="PS50078">
    <property type="entry name" value="POLO_BOX"/>
    <property type="match status" value="2"/>
</dbReference>
<dbReference type="PROSITE" id="PS00107">
    <property type="entry name" value="PROTEIN_KINASE_ATP"/>
    <property type="match status" value="1"/>
</dbReference>
<dbReference type="PROSITE" id="PS50011">
    <property type="entry name" value="PROTEIN_KINASE_DOM"/>
    <property type="match status" value="1"/>
</dbReference>
<dbReference type="PROSITE" id="PS00108">
    <property type="entry name" value="PROTEIN_KINASE_ST"/>
    <property type="match status" value="1"/>
</dbReference>
<accession>Q9H4B4</accession>
<accession>Q15767</accession>
<accession>Q5JR99</accession>
<accession>Q96CV1</accession>
<feature type="chain" id="PRO_0000086564" description="Serine/threonine-protein kinase PLK3">
    <location>
        <begin position="1"/>
        <end position="646"/>
    </location>
</feature>
<feature type="domain" description="Protein kinase" evidence="3">
    <location>
        <begin position="62"/>
        <end position="314"/>
    </location>
</feature>
<feature type="domain" description="POLO box 1" evidence="2">
    <location>
        <begin position="463"/>
        <end position="541"/>
    </location>
</feature>
<feature type="domain" description="POLO box 2" evidence="2">
    <location>
        <begin position="562"/>
        <end position="645"/>
    </location>
</feature>
<feature type="region of interest" description="Disordered" evidence="5">
    <location>
        <begin position="1"/>
        <end position="35"/>
    </location>
</feature>
<feature type="region of interest" description="Disordered" evidence="5">
    <location>
        <begin position="381"/>
        <end position="417"/>
    </location>
</feature>
<feature type="compositionally biased region" description="Low complexity" evidence="5">
    <location>
        <begin position="10"/>
        <end position="19"/>
    </location>
</feature>
<feature type="compositionally biased region" description="Pro residues" evidence="5">
    <location>
        <begin position="20"/>
        <end position="31"/>
    </location>
</feature>
<feature type="active site" description="Proton acceptor" evidence="3 4">
    <location>
        <position position="185"/>
    </location>
</feature>
<feature type="binding site" evidence="3">
    <location>
        <begin position="68"/>
        <end position="76"/>
    </location>
    <ligand>
        <name>ATP</name>
        <dbReference type="ChEBI" id="CHEBI:30616"/>
    </ligand>
</feature>
<feature type="binding site" evidence="3">
    <location>
        <position position="91"/>
    </location>
    <ligand>
        <name>ATP</name>
        <dbReference type="ChEBI" id="CHEBI:30616"/>
    </ligand>
</feature>
<feature type="sequence variant" id="VAR_021091" description="In dbSNP:rs17884581." evidence="34">
    <original>T</original>
    <variation>S</variation>
    <location>
        <position position="61"/>
    </location>
</feature>
<feature type="sequence variant" id="VAR_021092" description="In dbSNP:rs17884316." evidence="34">
    <original>L</original>
    <variation>F</variation>
    <location>
        <position position="68"/>
    </location>
</feature>
<feature type="sequence variant" id="VAR_021093" description="In dbSNP:rs17880471." evidence="34">
    <original>L</original>
    <variation>F</variation>
    <location>
        <position position="283"/>
    </location>
</feature>
<feature type="sequence variant" id="VAR_021094" description="In dbSNP:rs17884653." evidence="34">
    <original>R</original>
    <variation>C</variation>
    <location>
        <position position="483"/>
    </location>
</feature>
<feature type="sequence variant" id="VAR_062384" description="In dbSNP:rs17855444." evidence="16">
    <original>D</original>
    <variation>N</variation>
    <location>
        <position position="491"/>
    </location>
</feature>
<feature type="sequence variant" id="VAR_021095" description="In dbSNP:rs17880829." evidence="34">
    <original>S</original>
    <variation>L</variation>
    <location>
        <position position="498"/>
    </location>
</feature>
<feature type="sequence variant" id="VAR_021096" description="In dbSNP:rs17881786." evidence="34">
    <original>S</original>
    <variation>P</variation>
    <location>
        <position position="618"/>
    </location>
</feature>
<feature type="mutagenesis site" description="Kinase defective mutant, abolishes activity." evidence="8 14 20 23 24 26 27">
    <original>K</original>
    <variation>R</variation>
    <location>
        <position position="91"/>
    </location>
</feature>
<feature type="mutagenesis site" description="Kinase defective mutant, abolishes activity." evidence="7">
    <original>D</original>
    <variation>A</variation>
    <location>
        <position position="203"/>
    </location>
</feature>
<feature type="mutagenesis site" description="Kinase-defective mutant." evidence="17">
    <original>T</original>
    <variation>E</variation>
    <location>
        <position position="219"/>
    </location>
</feature>
<feature type="mutagenesis site" description="Abolishes localization to the centrosome and ability to induce the G2/M arrest." evidence="17">
    <original>WV</original>
    <variation>FA</variation>
    <location>
        <begin position="467"/>
        <end position="468"/>
    </location>
</feature>
<feature type="sequence conflict" description="In Ref. 1; CAC10659." evidence="35" ref="1">
    <original>A</original>
    <variation>T</variation>
    <location>
        <position position="16"/>
    </location>
</feature>
<feature type="sequence conflict" description="In Ref. 1; CAC10659." evidence="35" ref="1">
    <original>P</original>
    <variation>T</variation>
    <location>
        <position position="20"/>
    </location>
</feature>
<feature type="sequence conflict" description="In Ref. 1; CAC10659." evidence="35" ref="1">
    <original>A</original>
    <variation>V</variation>
    <location>
        <position position="99"/>
    </location>
</feature>
<feature type="sequence conflict" description="In Ref. 1; CAC10659." evidence="35" ref="1">
    <original>G</original>
    <variation>V</variation>
    <location>
        <position position="353"/>
    </location>
</feature>
<feature type="sequence conflict" description="In Ref. 1; CAC10659." evidence="35" ref="1">
    <original>D</original>
    <variation>H</variation>
    <location>
        <position position="419"/>
    </location>
</feature>
<feature type="sequence conflict" description="In Ref. 1; CAC10659." evidence="35" ref="1">
    <original>VSKWVDY</original>
    <variation>FSEWVGF</variation>
    <location>
        <begin position="464"/>
        <end position="470"/>
    </location>
</feature>
<feature type="sequence conflict" description="In Ref. 1; CAC10659." evidence="35" ref="1">
    <original>P</original>
    <variation>R</variation>
    <location>
        <position position="522"/>
    </location>
</feature>
<feature type="strand" evidence="36">
    <location>
        <begin position="62"/>
        <end position="69"/>
    </location>
</feature>
<feature type="strand" evidence="36">
    <location>
        <begin position="75"/>
        <end position="81"/>
    </location>
</feature>
<feature type="turn" evidence="36">
    <location>
        <begin position="82"/>
        <end position="84"/>
    </location>
</feature>
<feature type="strand" evidence="36">
    <location>
        <begin position="87"/>
        <end position="94"/>
    </location>
</feature>
<feature type="helix" evidence="36">
    <location>
        <begin position="95"/>
        <end position="98"/>
    </location>
</feature>
<feature type="helix" evidence="36">
    <location>
        <begin position="101"/>
        <end position="114"/>
    </location>
</feature>
<feature type="strand" evidence="36">
    <location>
        <begin position="125"/>
        <end position="130"/>
    </location>
</feature>
<feature type="strand" evidence="36">
    <location>
        <begin position="132"/>
        <end position="139"/>
    </location>
</feature>
<feature type="helix" evidence="36">
    <location>
        <begin position="147"/>
        <end position="154"/>
    </location>
</feature>
<feature type="helix" evidence="36">
    <location>
        <begin position="159"/>
        <end position="178"/>
    </location>
</feature>
<feature type="helix" evidence="36">
    <location>
        <begin position="188"/>
        <end position="190"/>
    </location>
</feature>
<feature type="strand" evidence="36">
    <location>
        <begin position="191"/>
        <end position="193"/>
    </location>
</feature>
<feature type="strand" evidence="36">
    <location>
        <begin position="199"/>
        <end position="201"/>
    </location>
</feature>
<feature type="turn" evidence="36">
    <location>
        <begin position="213"/>
        <end position="215"/>
    </location>
</feature>
<feature type="turn" evidence="36">
    <location>
        <begin position="224"/>
        <end position="226"/>
    </location>
</feature>
<feature type="helix" evidence="36">
    <location>
        <begin position="229"/>
        <end position="232"/>
    </location>
</feature>
<feature type="helix" evidence="36">
    <location>
        <begin position="239"/>
        <end position="255"/>
    </location>
</feature>
<feature type="helix" evidence="36">
    <location>
        <begin position="265"/>
        <end position="273"/>
    </location>
</feature>
<feature type="helix" evidence="36">
    <location>
        <begin position="285"/>
        <end position="294"/>
    </location>
</feature>
<feature type="helix" evidence="36">
    <location>
        <begin position="299"/>
        <end position="301"/>
    </location>
</feature>
<feature type="helix" evidence="36">
    <location>
        <begin position="305"/>
        <end position="309"/>
    </location>
</feature>
<feature type="helix" evidence="36">
    <location>
        <begin position="312"/>
        <end position="315"/>
    </location>
</feature>
<feature type="helix" evidence="36">
    <location>
        <begin position="325"/>
        <end position="328"/>
    </location>
</feature>
<organism>
    <name type="scientific">Homo sapiens</name>
    <name type="common">Human</name>
    <dbReference type="NCBI Taxonomy" id="9606"/>
    <lineage>
        <taxon>Eukaryota</taxon>
        <taxon>Metazoa</taxon>
        <taxon>Chordata</taxon>
        <taxon>Craniata</taxon>
        <taxon>Vertebrata</taxon>
        <taxon>Euteleostomi</taxon>
        <taxon>Mammalia</taxon>
        <taxon>Eutheria</taxon>
        <taxon>Euarchontoglires</taxon>
        <taxon>Primates</taxon>
        <taxon>Haplorrhini</taxon>
        <taxon>Catarrhini</taxon>
        <taxon>Hominidae</taxon>
        <taxon>Homo</taxon>
    </lineage>
</organism>
<evidence type="ECO:0000250" key="1"/>
<evidence type="ECO:0000255" key="2">
    <source>
        <dbReference type="PROSITE-ProRule" id="PRU00154"/>
    </source>
</evidence>
<evidence type="ECO:0000255" key="3">
    <source>
        <dbReference type="PROSITE-ProRule" id="PRU00159"/>
    </source>
</evidence>
<evidence type="ECO:0000255" key="4">
    <source>
        <dbReference type="PROSITE-ProRule" id="PRU10027"/>
    </source>
</evidence>
<evidence type="ECO:0000256" key="5">
    <source>
        <dbReference type="SAM" id="MobiDB-lite"/>
    </source>
</evidence>
<evidence type="ECO:0000269" key="6">
    <source>
    </source>
</evidence>
<evidence type="ECO:0000269" key="7">
    <source>
    </source>
</evidence>
<evidence type="ECO:0000269" key="8">
    <source>
    </source>
</evidence>
<evidence type="ECO:0000269" key="9">
    <source>
    </source>
</evidence>
<evidence type="ECO:0000269" key="10">
    <source>
    </source>
</evidence>
<evidence type="ECO:0000269" key="11">
    <source>
    </source>
</evidence>
<evidence type="ECO:0000269" key="12">
    <source>
    </source>
</evidence>
<evidence type="ECO:0000269" key="13">
    <source>
    </source>
</evidence>
<evidence type="ECO:0000269" key="14">
    <source>
    </source>
</evidence>
<evidence type="ECO:0000269" key="15">
    <source>
    </source>
</evidence>
<evidence type="ECO:0000269" key="16">
    <source>
    </source>
</evidence>
<evidence type="ECO:0000269" key="17">
    <source>
    </source>
</evidence>
<evidence type="ECO:0000269" key="18">
    <source>
    </source>
</evidence>
<evidence type="ECO:0000269" key="19">
    <source>
    </source>
</evidence>
<evidence type="ECO:0000269" key="20">
    <source>
    </source>
</evidence>
<evidence type="ECO:0000269" key="21">
    <source>
    </source>
</evidence>
<evidence type="ECO:0000269" key="22">
    <source>
    </source>
</evidence>
<evidence type="ECO:0000269" key="23">
    <source>
    </source>
</evidence>
<evidence type="ECO:0000269" key="24">
    <source>
    </source>
</evidence>
<evidence type="ECO:0000269" key="25">
    <source>
    </source>
</evidence>
<evidence type="ECO:0000269" key="26">
    <source>
    </source>
</evidence>
<evidence type="ECO:0000269" key="27">
    <source>
    </source>
</evidence>
<evidence type="ECO:0000269" key="28">
    <source>
    </source>
</evidence>
<evidence type="ECO:0000269" key="29">
    <source>
    </source>
</evidence>
<evidence type="ECO:0000269" key="30">
    <source>
    </source>
</evidence>
<evidence type="ECO:0000269" key="31">
    <source>
    </source>
</evidence>
<evidence type="ECO:0000269" key="32">
    <source>
    </source>
</evidence>
<evidence type="ECO:0000269" key="33">
    <source>
    </source>
</evidence>
<evidence type="ECO:0000269" key="34">
    <source ref="2"/>
</evidence>
<evidence type="ECO:0000305" key="35"/>
<evidence type="ECO:0007829" key="36">
    <source>
        <dbReference type="PDB" id="4B6L"/>
    </source>
</evidence>
<reference key="1">
    <citation type="journal article" date="2000" name="Oncogene">
        <title>Adhesion induced expression of the serine/threonine kinase Fnk in human macrophages.</title>
        <authorList>
            <person name="Holtrich U."/>
            <person name="Wolf G."/>
            <person name="Yuan J."/>
            <person name="Bereiter-Hahn J."/>
            <person name="Karn T."/>
            <person name="Weiler M."/>
            <person name="Kauselmann G."/>
            <person name="Rehli M."/>
            <person name="Andreesen R."/>
            <person name="Kaufmann M."/>
            <person name="Kuhl D."/>
            <person name="Strebhardt K."/>
        </authorList>
    </citation>
    <scope>NUCLEOTIDE SEQUENCE [MRNA]</scope>
    <source>
        <tissue>Embryo</tissue>
    </source>
</reference>
<reference key="2">
    <citation type="submission" date="2004-09" db="EMBL/GenBank/DDBJ databases">
        <authorList>
            <consortium name="NIEHS SNPs program"/>
        </authorList>
    </citation>
    <scope>NUCLEOTIDE SEQUENCE [GENOMIC DNA]</scope>
    <scope>VARIANTS SER-61; PHE-68; PHE-283; CYS-483; LEU-498 AND PRO-618</scope>
</reference>
<reference key="3">
    <citation type="journal article" date="2006" name="Nature">
        <title>The DNA sequence and biological annotation of human chromosome 1.</title>
        <authorList>
            <person name="Gregory S.G."/>
            <person name="Barlow K.F."/>
            <person name="McLay K.E."/>
            <person name="Kaul R."/>
            <person name="Swarbreck D."/>
            <person name="Dunham A."/>
            <person name="Scott C.E."/>
            <person name="Howe K.L."/>
            <person name="Woodfine K."/>
            <person name="Spencer C.C.A."/>
            <person name="Jones M.C."/>
            <person name="Gillson C."/>
            <person name="Searle S."/>
            <person name="Zhou Y."/>
            <person name="Kokocinski F."/>
            <person name="McDonald L."/>
            <person name="Evans R."/>
            <person name="Phillips K."/>
            <person name="Atkinson A."/>
            <person name="Cooper R."/>
            <person name="Jones C."/>
            <person name="Hall R.E."/>
            <person name="Andrews T.D."/>
            <person name="Lloyd C."/>
            <person name="Ainscough R."/>
            <person name="Almeida J.P."/>
            <person name="Ambrose K.D."/>
            <person name="Anderson F."/>
            <person name="Andrew R.W."/>
            <person name="Ashwell R.I.S."/>
            <person name="Aubin K."/>
            <person name="Babbage A.K."/>
            <person name="Bagguley C.L."/>
            <person name="Bailey J."/>
            <person name="Beasley H."/>
            <person name="Bethel G."/>
            <person name="Bird C.P."/>
            <person name="Bray-Allen S."/>
            <person name="Brown J.Y."/>
            <person name="Brown A.J."/>
            <person name="Buckley D."/>
            <person name="Burton J."/>
            <person name="Bye J."/>
            <person name="Carder C."/>
            <person name="Chapman J.C."/>
            <person name="Clark S.Y."/>
            <person name="Clarke G."/>
            <person name="Clee C."/>
            <person name="Cobley V."/>
            <person name="Collier R.E."/>
            <person name="Corby N."/>
            <person name="Coville G.J."/>
            <person name="Davies J."/>
            <person name="Deadman R."/>
            <person name="Dunn M."/>
            <person name="Earthrowl M."/>
            <person name="Ellington A.G."/>
            <person name="Errington H."/>
            <person name="Frankish A."/>
            <person name="Frankland J."/>
            <person name="French L."/>
            <person name="Garner P."/>
            <person name="Garnett J."/>
            <person name="Gay L."/>
            <person name="Ghori M.R.J."/>
            <person name="Gibson R."/>
            <person name="Gilby L.M."/>
            <person name="Gillett W."/>
            <person name="Glithero R.J."/>
            <person name="Grafham D.V."/>
            <person name="Griffiths C."/>
            <person name="Griffiths-Jones S."/>
            <person name="Grocock R."/>
            <person name="Hammond S."/>
            <person name="Harrison E.S.I."/>
            <person name="Hart E."/>
            <person name="Haugen E."/>
            <person name="Heath P.D."/>
            <person name="Holmes S."/>
            <person name="Holt K."/>
            <person name="Howden P.J."/>
            <person name="Hunt A.R."/>
            <person name="Hunt S.E."/>
            <person name="Hunter G."/>
            <person name="Isherwood J."/>
            <person name="James R."/>
            <person name="Johnson C."/>
            <person name="Johnson D."/>
            <person name="Joy A."/>
            <person name="Kay M."/>
            <person name="Kershaw J.K."/>
            <person name="Kibukawa M."/>
            <person name="Kimberley A.M."/>
            <person name="King A."/>
            <person name="Knights A.J."/>
            <person name="Lad H."/>
            <person name="Laird G."/>
            <person name="Lawlor S."/>
            <person name="Leongamornlert D.A."/>
            <person name="Lloyd D.M."/>
            <person name="Loveland J."/>
            <person name="Lovell J."/>
            <person name="Lush M.J."/>
            <person name="Lyne R."/>
            <person name="Martin S."/>
            <person name="Mashreghi-Mohammadi M."/>
            <person name="Matthews L."/>
            <person name="Matthews N.S.W."/>
            <person name="McLaren S."/>
            <person name="Milne S."/>
            <person name="Mistry S."/>
            <person name="Moore M.J.F."/>
            <person name="Nickerson T."/>
            <person name="O'Dell C.N."/>
            <person name="Oliver K."/>
            <person name="Palmeiri A."/>
            <person name="Palmer S.A."/>
            <person name="Parker A."/>
            <person name="Patel D."/>
            <person name="Pearce A.V."/>
            <person name="Peck A.I."/>
            <person name="Pelan S."/>
            <person name="Phelps K."/>
            <person name="Phillimore B.J."/>
            <person name="Plumb R."/>
            <person name="Rajan J."/>
            <person name="Raymond C."/>
            <person name="Rouse G."/>
            <person name="Saenphimmachak C."/>
            <person name="Sehra H.K."/>
            <person name="Sheridan E."/>
            <person name="Shownkeen R."/>
            <person name="Sims S."/>
            <person name="Skuce C.D."/>
            <person name="Smith M."/>
            <person name="Steward C."/>
            <person name="Subramanian S."/>
            <person name="Sycamore N."/>
            <person name="Tracey A."/>
            <person name="Tromans A."/>
            <person name="Van Helmond Z."/>
            <person name="Wall M."/>
            <person name="Wallis J.M."/>
            <person name="White S."/>
            <person name="Whitehead S.L."/>
            <person name="Wilkinson J.E."/>
            <person name="Willey D.L."/>
            <person name="Williams H."/>
            <person name="Wilming L."/>
            <person name="Wray P.W."/>
            <person name="Wu Z."/>
            <person name="Coulson A."/>
            <person name="Vaudin M."/>
            <person name="Sulston J.E."/>
            <person name="Durbin R.M."/>
            <person name="Hubbard T."/>
            <person name="Wooster R."/>
            <person name="Dunham I."/>
            <person name="Carter N.P."/>
            <person name="McVean G."/>
            <person name="Ross M.T."/>
            <person name="Harrow J."/>
            <person name="Olson M.V."/>
            <person name="Beck S."/>
            <person name="Rogers J."/>
            <person name="Bentley D.R."/>
        </authorList>
    </citation>
    <scope>NUCLEOTIDE SEQUENCE [LARGE SCALE GENOMIC DNA]</scope>
</reference>
<reference key="4">
    <citation type="submission" date="2005-09" db="EMBL/GenBank/DDBJ databases">
        <authorList>
            <person name="Mural R.J."/>
            <person name="Istrail S."/>
            <person name="Sutton G.G."/>
            <person name="Florea L."/>
            <person name="Halpern A.L."/>
            <person name="Mobarry C.M."/>
            <person name="Lippert R."/>
            <person name="Walenz B."/>
            <person name="Shatkay H."/>
            <person name="Dew I."/>
            <person name="Miller J.R."/>
            <person name="Flanigan M.J."/>
            <person name="Edwards N.J."/>
            <person name="Bolanos R."/>
            <person name="Fasulo D."/>
            <person name="Halldorsson B.V."/>
            <person name="Hannenhalli S."/>
            <person name="Turner R."/>
            <person name="Yooseph S."/>
            <person name="Lu F."/>
            <person name="Nusskern D.R."/>
            <person name="Shue B.C."/>
            <person name="Zheng X.H."/>
            <person name="Zhong F."/>
            <person name="Delcher A.L."/>
            <person name="Huson D.H."/>
            <person name="Kravitz S.A."/>
            <person name="Mouchard L."/>
            <person name="Reinert K."/>
            <person name="Remington K.A."/>
            <person name="Clark A.G."/>
            <person name="Waterman M.S."/>
            <person name="Eichler E.E."/>
            <person name="Adams M.D."/>
            <person name="Hunkapiller M.W."/>
            <person name="Myers E.W."/>
            <person name="Venter J.C."/>
        </authorList>
    </citation>
    <scope>NUCLEOTIDE SEQUENCE [LARGE SCALE GENOMIC DNA]</scope>
</reference>
<reference key="5">
    <citation type="journal article" date="2004" name="Genome Res.">
        <title>The status, quality, and expansion of the NIH full-length cDNA project: the Mammalian Gene Collection (MGC).</title>
        <authorList>
            <consortium name="The MGC Project Team"/>
        </authorList>
    </citation>
    <scope>NUCLEOTIDE SEQUENCE [LARGE SCALE MRNA]</scope>
    <scope>VARIANT ASN-491</scope>
    <source>
        <tissue>Brain</tissue>
    </source>
</reference>
<reference key="6">
    <citation type="journal article" date="1996" name="J. Biol. Chem.">
        <title>Prk, a cytokine-inducible human protein serine/threonine kinase whose expression appears to be down-regulated in lung carcinomas.</title>
        <authorList>
            <person name="Li B."/>
            <person name="Ouyang B."/>
            <person name="Pan H."/>
            <person name="Reissmann P.T."/>
            <person name="Slamon D.J."/>
            <person name="Arceci R."/>
            <person name="Lu L."/>
            <person name="Dai W."/>
        </authorList>
    </citation>
    <scope>NUCLEOTIDE SEQUENCE [MRNA] OF 28-646</scope>
    <source>
        <tissue>Placenta</tissue>
    </source>
</reference>
<reference key="7">
    <citation type="journal article" date="2001" name="Genes Chromosomes Cancer">
        <title>Intron/exon organization and polymorphisms of the PLK3/PRK gene in human lung carcinoma cell lines.</title>
        <authorList>
            <person name="Wiest J."/>
            <person name="Clark A.M."/>
            <person name="Dai W."/>
        </authorList>
    </citation>
    <scope>INDUCTION</scope>
</reference>
<reference key="8">
    <citation type="journal article" date="2002" name="Oncogene">
        <title>Mammalian Polo-like kinase 3 (Plk3) is a multifunctional protein involved in stress response pathways.</title>
        <authorList>
            <person name="Bahassi el M."/>
            <person name="Conn C.W."/>
            <person name="Myer D.L."/>
            <person name="Hennigan R.F."/>
            <person name="McGowan C.H."/>
            <person name="Sanchez Y."/>
            <person name="Stambrook P.J."/>
        </authorList>
    </citation>
    <scope>FUNCTION IN PHOSPHORYLATION OF TP53 AND CHEK2</scope>
    <scope>PHOSPHORYLATION</scope>
</reference>
<reference key="9">
    <citation type="journal article" date="1997" name="J. Biol. Chem.">
        <title>Human Prk is a conserved protein serine/threonine kinase involved in regulating M phase functions.</title>
        <authorList>
            <person name="Ouyang B."/>
            <person name="Pan H."/>
            <person name="Lu L."/>
            <person name="Li J."/>
            <person name="Stambrook P."/>
            <person name="Li B."/>
            <person name="Dai W."/>
        </authorList>
    </citation>
    <scope>FUNCTION</scope>
</reference>
<reference key="10">
    <citation type="journal article" date="1999" name="Oncogene">
        <title>The physical association and phosphorylation of Cdc25C protein phosphatase by Prk.</title>
        <authorList>
            <person name="Ouyang B."/>
            <person name="Li W."/>
            <person name="Pan H."/>
            <person name="Meadows J."/>
            <person name="Hoffmann I."/>
            <person name="Dai W."/>
        </authorList>
    </citation>
    <scope>FUNCTION</scope>
</reference>
<reference key="11">
    <citation type="journal article" date="2000" name="Cancer Res.">
        <title>Incomplete cytokinesis and induction of apoptosis by overexpression of the mammalian polo-like kinase, Plk3.</title>
        <authorList>
            <person name="Conn C.W."/>
            <person name="Hennigan R.F."/>
            <person name="Dai W."/>
            <person name="Sanchez Y."/>
            <person name="Stambrook P.J."/>
        </authorList>
    </citation>
    <scope>FUNCTION</scope>
    <scope>MUTAGENESIS OF ASP-203</scope>
</reference>
<reference key="12">
    <citation type="journal article" date="2001" name="J. Biol. Chem.">
        <title>Reactive oxygen species-induced phosphorylation of p53 on serine 20 is mediated in part by polo-like kinase-3.</title>
        <authorList>
            <person name="Xie S."/>
            <person name="Wang Q."/>
            <person name="Wu H."/>
            <person name="Cogswell J."/>
            <person name="Lu L."/>
            <person name="Jhanwar-Uniyal M."/>
            <person name="Dai W."/>
        </authorList>
    </citation>
    <scope>FUNCTION IN PHOSPHORYLATION OF TP53</scope>
    <scope>MUTAGENESIS OF LYS-91</scope>
</reference>
<reference key="13">
    <citation type="journal article" date="2001" name="J. Biol. Chem.">
        <title>Plk3 functionally links DNA damage to cell cycle arrest and apoptosis at least in part via the p53 pathway.</title>
        <authorList>
            <person name="Xie S."/>
            <person name="Wu H."/>
            <person name="Wang Q."/>
            <person name="Cogswell J.P."/>
            <person name="Husain I."/>
            <person name="Conn C."/>
            <person name="Stambrook P."/>
            <person name="Jhanwar-Uniyal M."/>
            <person name="Dai W."/>
        </authorList>
    </citation>
    <scope>FUNCTION IN PHOSPHORYLATION OF TP53</scope>
</reference>
<reference key="14">
    <citation type="journal article" date="2002" name="Mol. Cell. Biol.">
        <title>Cell cycle arrest and apoptosis induced by human Polo-like kinase 3 is mediated through perturbation of microtubule integrity.</title>
        <authorList>
            <person name="Wang Q."/>
            <person name="Xie S."/>
            <person name="Chen J."/>
            <person name="Fukasawa K."/>
            <person name="Naik U."/>
            <person name="Traganos F."/>
            <person name="Darzynkiewicz Z."/>
            <person name="Jhanwar-Uniyal M."/>
            <person name="Dai W."/>
        </authorList>
    </citation>
    <scope>FUNCTION</scope>
</reference>
<reference key="15">
    <citation type="journal article" date="2004" name="Exp. Cell Res.">
        <title>Polo-like kinase 3 is Golgi localized and involved in regulating Golgi fragmentation during the cell cycle.</title>
        <authorList>
            <person name="Ruan Q."/>
            <person name="Wang Q."/>
            <person name="Xie S."/>
            <person name="Fang Y."/>
            <person name="Darzynkiewicz Z."/>
            <person name="Guan K."/>
            <person name="Jhanwar-Uniyal M."/>
            <person name="Dai W."/>
        </authorList>
    </citation>
    <scope>FUNCTION</scope>
    <scope>SUBCELLULAR LOCATION</scope>
    <scope>INTERACTION WITH GOLGB1</scope>
    <scope>MUTAGENESIS OF LYS-91</scope>
</reference>
<reference key="16">
    <citation type="journal article" date="2004" name="Oncogene">
        <title>Cdc25C phosphorylation on serine 191 by Plk3 promotes its nuclear translocation.</title>
        <authorList>
            <person name="Bahassi el M."/>
            <person name="Hennigan R.F."/>
            <person name="Myer D.L."/>
            <person name="Stambrook P.J."/>
        </authorList>
    </citation>
    <scope>FUNCTION IN PHOSPHORYLATION OF CDC25C</scope>
</reference>
<reference key="17">
    <citation type="journal article" date="2004" name="Oncogene">
        <title>MEK1-induced Golgi dynamics during cell cycle progression is partly mediated by Polo-like kinase-3.</title>
        <authorList>
            <person name="Xie S."/>
            <person name="Wang Q."/>
            <person name="Ruan Q."/>
            <person name="Liu T."/>
            <person name="Jhanwar-Uniyal M."/>
            <person name="Guan K."/>
            <person name="Dai W."/>
        </authorList>
    </citation>
    <scope>FUNCTION</scope>
</reference>
<reference key="18">
    <citation type="journal article" date="2006" name="J. Biol. Chem.">
        <title>Polo box domain of Plk3 functions as a centrosome localization signal, overexpression of which causes mitotic arrest, cytokinesis defects, and apoptosis.</title>
        <authorList>
            <person name="Jiang N."/>
            <person name="Wang X."/>
            <person name="Jhanwar-Uniyal M."/>
            <person name="Darzynkiewicz Z."/>
            <person name="Dai W."/>
        </authorList>
    </citation>
    <scope>FUNCTION</scope>
    <scope>SUBCELLULAR LOCATION</scope>
    <scope>MUTAGENESIS OF THR-219 AND 467-TRP-VAL-468</scope>
</reference>
<reference key="19">
    <citation type="journal article" date="2006" name="Mutat. Res.">
        <title>Priming phosphorylation of Chk2 by polo-like kinase 3 (Plk3) mediates its full activation by ATM and a downstream checkpoint in response to DNA damage.</title>
        <authorList>
            <person name="Bahassi el M."/>
            <person name="Myer D.L."/>
            <person name="McKenney R.J."/>
            <person name="Hennigan R.F."/>
            <person name="Stambrook P.J."/>
        </authorList>
    </citation>
    <scope>FUNCTION IN PHOSPHORYLATION OF TP53 AND CHEK2</scope>
</reference>
<reference key="20">
    <citation type="journal article" date="2007" name="J. Biol. Chem.">
        <title>Stress-induced c-Jun activation mediated by Polo-like kinase 3 in corneal epithelial cells.</title>
        <authorList>
            <person name="Wang L."/>
            <person name="Dai W."/>
            <person name="Lu L."/>
        </authorList>
    </citation>
    <scope>FUNCTION IN PHOSPHORYLATION OF JUN</scope>
    <scope>MUTAGENESIS OF LYS-91</scope>
</reference>
<reference key="21">
    <citation type="journal article" date="2007" name="Proc. Natl. Acad. Sci. U.S.A.">
        <title>Polo-like kinase 3 is required for entry into S phase.</title>
        <authorList>
            <person name="Zimmerman W.C."/>
            <person name="Erikson R.L."/>
        </authorList>
    </citation>
    <scope>FUNCTION</scope>
    <scope>SUBCELLULAR LOCATION</scope>
    <scope>DEVELOPMENTAL STAGE</scope>
</reference>
<reference key="22">
    <citation type="journal article" date="2008" name="Biochem. J.">
        <title>Plk3 phosphorylates topoisomerase IIalpha at Thr(1342), a site that is not recognized by Plk1.</title>
        <authorList>
            <person name="Iida M."/>
            <person name="Matsuda M."/>
            <person name="Komatani H."/>
        </authorList>
    </citation>
    <scope>FUNCTION IN PHOSPHORYLATION OF TOP2A</scope>
</reference>
<reference key="23">
    <citation type="journal article" date="2008" name="J. Biol. Chem.">
        <title>Activation of Polo-like kinase 3 by hypoxic stresses.</title>
        <authorList>
            <person name="Wang L."/>
            <person name="Gao J."/>
            <person name="Dai W."/>
            <person name="Lu L."/>
        </authorList>
    </citation>
    <scope>FUNCTION IN PHOSPHORYLATION OF JUN</scope>
    <scope>SUBCELLULAR LOCATION</scope>
</reference>
<reference key="24">
    <citation type="journal article" date="2009" name="Genes Cells">
        <title>Plk3 inhibits pro-apoptotic activity of p73 through physical interaction and phosphorylation.</title>
        <authorList>
            <person name="Sang M."/>
            <person name="Ando K."/>
            <person name="Okoshi R."/>
            <person name="Koida N."/>
            <person name="Li Y."/>
            <person name="Zhu Y."/>
            <person name="Shimozato O."/>
            <person name="Geng C."/>
            <person name="Shan B."/>
            <person name="Nakagawara A."/>
            <person name="Ozaki T."/>
        </authorList>
    </citation>
    <scope>FUNCTION IN PHOSPHORYLATION OF TP73</scope>
    <scope>SUBCELLULAR LOCATION</scope>
    <scope>MUTAGENESIS OF LYS-91</scope>
</reference>
<reference key="25">
    <citation type="journal article" date="2009" name="Mol. Cell. Biol.">
        <title>Plk3 interacts with and specifically phosphorylates VRK1 in Ser342, a downstream target in a pathway that induces Golgi fragmentation.</title>
        <authorList>
            <person name="Lopez-Sanchez I."/>
            <person name="Sanz-Garcia M."/>
            <person name="Lazo P.A."/>
        </authorList>
    </citation>
    <scope>FUNCTION IN PHOSPHORYLATION OF VRK1</scope>
    <scope>MUTAGENESIS OF LYS-91</scope>
</reference>
<reference key="26">
    <citation type="journal article" date="2010" name="J. Biol. Chem.">
        <title>Plk3 functions as an essential component of the hypoxia regulatory pathway by direct phosphorylation of HIF-1alpha.</title>
        <authorList>
            <person name="Xu D."/>
            <person name="Yao Y."/>
            <person name="Lu L."/>
            <person name="Costa M."/>
            <person name="Dai W."/>
        </authorList>
    </citation>
    <scope>FUNCTION IN PHOSPHORYLATION OF HIF1A</scope>
    <scope>MUTAGENESIS OF LYS-91</scope>
</reference>
<reference key="27">
    <citation type="journal article" date="2010" name="J. Biol. Chem.">
        <title>Regulation of PTEN stability and activity by Plk3.</title>
        <authorList>
            <person name="Xu D."/>
            <person name="Yao Y."/>
            <person name="Jiang X."/>
            <person name="Lu L."/>
            <person name="Dai W."/>
        </authorList>
    </citation>
    <scope>FUNCTION IN PHOSPHORYLATION OF PTEN</scope>
    <scope>MUTAGENESIS OF LYS-91</scope>
</reference>
<reference key="28">
    <citation type="journal article" date="2011" name="Int. J. Biochem. Cell Biol.">
        <title>Calcium- and integrin-binding protein 1 regulates microtubule organization and centrosome segregation through polo like kinase 3 during cell cycle progression.</title>
        <authorList>
            <person name="Naik M.U."/>
            <person name="Naik U.P."/>
        </authorList>
    </citation>
    <scope>FUNCTION</scope>
    <scope>INTERACTION WITH CIB1</scope>
    <scope>SUBCELLULAR LOCATION</scope>
</reference>
<reference key="29">
    <citation type="journal article" date="2011" name="Int. J. Cancer">
        <title>Calcium-dependent inhibition of polo-like kinase 3 activity by CIB1 in breast cancer cells.</title>
        <authorList>
            <person name="Naik M.U."/>
            <person name="Pham N.T."/>
            <person name="Beebe K."/>
            <person name="Dai W."/>
            <person name="Naik U.P."/>
        </authorList>
    </citation>
    <scope>INTERACTION WITH CIB1</scope>
</reference>
<reference key="30">
    <citation type="journal article" date="2011" name="J. Biol. Chem.">
        <title>Hyperosmotic stress-induced ATF-2 activation through Polo-like kinase 3 in human corneal epithelial cells.</title>
        <authorList>
            <person name="Wang L."/>
            <person name="Payton R."/>
            <person name="Dai W."/>
            <person name="Lu L."/>
        </authorList>
    </citation>
    <scope>FUNCTION IN PHOSPHORYLATION OF ATF2</scope>
    <scope>SUBCELLULAR LOCATION</scope>
</reference>
<reference key="31">
    <citation type="journal article" date="2011" name="Cell. Signal.">
        <title>Bcl-xL phosphorylation at Ser49 by polo kinase 3 during cell cycle progression and checkpoints.</title>
        <authorList>
            <person name="Wang J."/>
            <person name="Beauchemin M."/>
            <person name="Bertrand R."/>
        </authorList>
    </citation>
    <scope>FUNCTION IN PHOSPHORYLATION OF BCL2L1</scope>
</reference>
<reference key="32">
    <citation type="journal article" date="2011" name="Mutat. Res.">
        <title>Absence of polo-like kinase 3 in mice stabilizes Cdc25A after DNA damage but is not sufficient to produce tumors.</title>
        <authorList>
            <person name="Myer D.L."/>
            <person name="Robbins S.B."/>
            <person name="Yin M."/>
            <person name="Boivin G.P."/>
            <person name="Liu Y."/>
            <person name="Greis K.D."/>
            <person name="Bahassi el M."/>
            <person name="Stambrook P.J."/>
        </authorList>
    </citation>
    <scope>FUNCTION IN PHOSPHORYLATION OF CDC25A</scope>
</reference>
<reference key="33">
    <citation type="journal article" date="2011" name="PLoS ONE">
        <title>Calcium- and integrin-binding protein 1 regulates endomitosis and its interaction with Polo-like kinase 3 is enhanced in endomitotic Dami cells.</title>
        <authorList>
            <person name="Kostyak J.C."/>
            <person name="Naik U.P."/>
        </authorList>
    </citation>
    <scope>FUNCTION</scope>
    <scope>INTERACTION WITH CIB1</scope>
</reference>
<reference key="34">
    <citation type="journal article" date="2010" name="Nat. Rev. Drug Discov.">
        <title>Multifaceted polo-like kinases: drug targets and antitargets for cancer therapy.</title>
        <authorList>
            <person name="Strebhardt K."/>
        </authorList>
    </citation>
    <scope>REVIEW ON FUNCTION</scope>
</reference>
<comment type="function">
    <text evidence="6 7 8 9 11 12 13 14 15 17 18 19 20 21 22 23 24 26 27 28 29 30 31 32 33">Serine/threonine-protein kinase involved in cell cycle regulation, response to stress and Golgi disassembly. Polo-like kinases act by binding and phosphorylating proteins that are already phosphorylated on a specific motif recognized by the POLO box domains. Phosphorylates ATF2, BCL2L1, CDC25A, CDC25C, CHEK2, HIF1A, JUN, p53/TP53, p73/TP73, PTEN, TOP2A and VRK1. Involved in cell cycle regulation: required for entry into S phase and cytokinesis. Phosphorylates BCL2L1, leading to regulate the G2 checkpoint and progression to cytokinesis during mitosis. Plays a key role in response to stress: rapidly activated upon stress stimulation, such as ionizing radiation, reactive oxygen species (ROS), hyperosmotic stress, UV irradiation and hypoxia. Involved in DNA damage response and G1/S transition checkpoint by phosphorylating CDC25A, p53/TP53 and p73/TP73. Phosphorylates p53/TP53 in response to reactive oxygen species (ROS), thereby promoting p53/TP53-mediated apoptosis. Phosphorylates CHEK2 in response to DNA damage, promoting the G2/M transition checkpoint. Phosphorylates the transcription factor p73/TP73 in response to DNA damage, leading to inhibit p73/TP73-mediated transcriptional activation and pro-apoptotic functions. Phosphorylates HIF1A and JUN is response to hypoxia. Phosphorylates ATF2 following hyperosmotic stress in corneal epithelium. Also involved in Golgi disassembly during the cell cycle: part of a MEK1/MAP2K1-dependent pathway that induces Golgi fragmentation during mitosis by mediating phosphorylation of VRK1. May participate in endomitotic cell cycle, a form of mitosis in which both karyokinesis and cytokinesis are interrupted and is a hallmark of megakaryocyte differentiation, via its interaction with CIB1.</text>
</comment>
<comment type="catalytic activity">
    <reaction>
        <text>L-seryl-[protein] + ATP = O-phospho-L-seryl-[protein] + ADP + H(+)</text>
        <dbReference type="Rhea" id="RHEA:17989"/>
        <dbReference type="Rhea" id="RHEA-COMP:9863"/>
        <dbReference type="Rhea" id="RHEA-COMP:11604"/>
        <dbReference type="ChEBI" id="CHEBI:15378"/>
        <dbReference type="ChEBI" id="CHEBI:29999"/>
        <dbReference type="ChEBI" id="CHEBI:30616"/>
        <dbReference type="ChEBI" id="CHEBI:83421"/>
        <dbReference type="ChEBI" id="CHEBI:456216"/>
        <dbReference type="EC" id="2.7.11.21"/>
    </reaction>
</comment>
<comment type="catalytic activity">
    <reaction>
        <text>L-threonyl-[protein] + ATP = O-phospho-L-threonyl-[protein] + ADP + H(+)</text>
        <dbReference type="Rhea" id="RHEA:46608"/>
        <dbReference type="Rhea" id="RHEA-COMP:11060"/>
        <dbReference type="Rhea" id="RHEA-COMP:11605"/>
        <dbReference type="ChEBI" id="CHEBI:15378"/>
        <dbReference type="ChEBI" id="CHEBI:30013"/>
        <dbReference type="ChEBI" id="CHEBI:30616"/>
        <dbReference type="ChEBI" id="CHEBI:61977"/>
        <dbReference type="ChEBI" id="CHEBI:456216"/>
        <dbReference type="EC" id="2.7.11.21"/>
    </reaction>
</comment>
<comment type="subunit">
    <text evidence="14 25 28 30">Interacts (via the POLO-box domain) with CIB1; leading to inhibit PLK3 kinase activity. Interacts with GOLGB1.</text>
</comment>
<comment type="interaction">
    <interactant intactId="EBI-751877">
        <id>Q9H4B4</id>
    </interactant>
    <interactant intactId="EBI-373007">
        <id>Q9Y4Y9</id>
        <label>LSM5</label>
    </interactant>
    <organismsDiffer>false</organismsDiffer>
    <experiments>3</experiments>
</comment>
<comment type="interaction">
    <interactant intactId="EBI-751877">
        <id>Q9H4B4</id>
    </interactant>
    <interactant intactId="EBI-11956541">
        <id>Q9GZY8-5</id>
        <label>MFF</label>
    </interactant>
    <organismsDiffer>false</organismsDiffer>
    <experiments>3</experiments>
</comment>
<comment type="interaction">
    <interactant intactId="EBI-751877">
        <id>Q9H4B4</id>
    </interactant>
    <interactant intactId="EBI-624770">
        <id>P14859</id>
        <label>POU2F1</label>
    </interactant>
    <organismsDiffer>false</organismsDiffer>
    <experiments>3</experiments>
</comment>
<comment type="interaction">
    <interactant intactId="EBI-751877">
        <id>Q9H4B4</id>
    </interactant>
    <interactant intactId="EBI-977302">
        <id>P04156</id>
        <label>PRNP</label>
    </interactant>
    <organismsDiffer>false</organismsDiffer>
    <experiments>4</experiments>
</comment>
<comment type="interaction">
    <interactant intactId="EBI-751877">
        <id>Q9H4B4</id>
    </interactant>
    <interactant intactId="EBI-706448">
        <id>P43351</id>
        <label>RAD52</label>
    </interactant>
    <organismsDiffer>false</organismsDiffer>
    <experiments>3</experiments>
</comment>
<comment type="interaction">
    <interactant intactId="EBI-751877">
        <id>Q9H4B4</id>
    </interactant>
    <interactant intactId="EBI-4308142">
        <id>Q8WVD5</id>
        <label>RNF141</label>
    </interactant>
    <organismsDiffer>false</organismsDiffer>
    <experiments>3</experiments>
</comment>
<comment type="interaction">
    <interactant intactId="EBI-751877">
        <id>Q9H4B4</id>
    </interactant>
    <interactant intactId="EBI-1769146">
        <id>Q99986</id>
        <label>VRK1</label>
    </interactant>
    <organismsDiffer>false</organismsDiffer>
    <experiments>12</experiments>
</comment>
<comment type="subcellular location">
    <subcellularLocation>
        <location>Cytoplasm</location>
    </subcellularLocation>
    <subcellularLocation>
        <location>Nucleus</location>
    </subcellularLocation>
    <subcellularLocation>
        <location>Nucleus</location>
        <location>Nucleolus</location>
    </subcellularLocation>
    <subcellularLocation>
        <location>Golgi apparatus</location>
    </subcellularLocation>
    <subcellularLocation>
        <location>Cytoplasm</location>
        <location>Cytoskeleton</location>
        <location>Microtubule organizing center</location>
        <location>Centrosome</location>
    </subcellularLocation>
    <text evidence="19">Translocates to the nucleus upon cisplatin treatment. Localizes to the Golgi apparatus during interphase. According to a report, PLK3 localizes only in the nucleolus and not in the centrosome, or in any other location in the cytoplasm (PubMed:17264206). The discrepancies in results may be explained by the PLK3 antibody specificity, by cell line-specific expression or post-translational modifications.</text>
</comment>
<comment type="tissue specificity">
    <text>Transcripts are highly detected in placenta, lung, followed by skeletal muscle, heart, pancreas, ovaries and kidney and weakly detected in liver and brain. May have a short half-live. In cells of hematopoietic origin, strongly and exclusively detected in terminally differentiated macrophages. Transcript expression appears to be down-regulated in primary lung tumor.</text>
</comment>
<comment type="developmental stage">
    <text evidence="19">Expression is cell cycle regulated with a peak in G1 phase.</text>
</comment>
<comment type="induction">
    <text evidence="10">Cytokine and cellular adhesion trigger induction. Down-regulated in a majority of lung carcinoma samples.</text>
</comment>
<comment type="domain">
    <text evidence="1">The POLO box domains act as phosphopeptide-binding module that recognizes and binds serine-[phosphothreonine/phosphoserine]-(proline/X) motifs. PLK3 recognizes and binds docking proteins that are already phosphorylated on these motifs, and then phosphorylates them (By similarity). The POLO box domains mediate localization to the centrosome.</text>
</comment>
<comment type="PTM">
    <text evidence="12">Phosphorylated in an ATM-dependent manner following DNA damage. Phosphorylated as cells enter mitosis and dephosphorylated as cells exit mitosis.</text>
</comment>
<comment type="similarity">
    <text evidence="3">Belongs to the protein kinase superfamily. Ser/Thr protein kinase family. CDC5/Polo subfamily.</text>
</comment>
<comment type="sequence caution" evidence="35">
    <conflict type="erroneous initiation">
        <sequence resource="EMBL-CDS" id="AAC50637"/>
    </conflict>
    <text>Truncated N-terminus.</text>
</comment>
<proteinExistence type="evidence at protein level"/>